<dbReference type="EMBL" id="AM086385">
    <property type="protein sequence ID" value="CAJ31056.1"/>
    <property type="molecule type" value="mRNA"/>
</dbReference>
<dbReference type="RefSeq" id="NP_001104237.1">
    <property type="nucleotide sequence ID" value="NM_001110767.1"/>
</dbReference>
<dbReference type="BMRB" id="Q258K2"/>
<dbReference type="BioGRID" id="147001">
    <property type="interactions" value="1"/>
</dbReference>
<dbReference type="FunCoup" id="Q258K2">
    <property type="interactions" value="889"/>
</dbReference>
<dbReference type="IntAct" id="Q258K2">
    <property type="interactions" value="1"/>
</dbReference>
<dbReference type="STRING" id="9615.ENSCAFP00000057173"/>
<dbReference type="SwissPalm" id="Q258K2"/>
<dbReference type="PaxDb" id="9612-ENSCAFP00000002455"/>
<dbReference type="GeneID" id="481280"/>
<dbReference type="KEGG" id="cfa:481280"/>
<dbReference type="CTD" id="4627"/>
<dbReference type="eggNOG" id="KOG0161">
    <property type="taxonomic scope" value="Eukaryota"/>
</dbReference>
<dbReference type="InParanoid" id="Q258K2"/>
<dbReference type="OrthoDB" id="10254995at2759"/>
<dbReference type="Proteomes" id="UP000002254">
    <property type="component" value="Unplaced"/>
</dbReference>
<dbReference type="Proteomes" id="UP000694429">
    <property type="component" value="Unplaced"/>
</dbReference>
<dbReference type="Proteomes" id="UP000694542">
    <property type="component" value="Unplaced"/>
</dbReference>
<dbReference type="Proteomes" id="UP000805418">
    <property type="component" value="Unplaced"/>
</dbReference>
<dbReference type="GO" id="GO:0015629">
    <property type="term" value="C:actin cytoskeleton"/>
    <property type="evidence" value="ECO:0000250"/>
    <property type="project" value="UniProtKB"/>
</dbReference>
<dbReference type="GO" id="GO:0005826">
    <property type="term" value="C:actomyosin contractile ring"/>
    <property type="evidence" value="ECO:0000250"/>
    <property type="project" value="UniProtKB"/>
</dbReference>
<dbReference type="GO" id="GO:0005938">
    <property type="term" value="C:cell cortex"/>
    <property type="evidence" value="ECO:0000250"/>
    <property type="project" value="UniProtKB"/>
</dbReference>
<dbReference type="GO" id="GO:0031252">
    <property type="term" value="C:cell leading edge"/>
    <property type="evidence" value="ECO:0000250"/>
    <property type="project" value="UniProtKB"/>
</dbReference>
<dbReference type="GO" id="GO:0032154">
    <property type="term" value="C:cleavage furrow"/>
    <property type="evidence" value="ECO:0000250"/>
    <property type="project" value="UniProtKB"/>
</dbReference>
<dbReference type="GO" id="GO:0060473">
    <property type="term" value="C:cortical granule"/>
    <property type="evidence" value="ECO:0000250"/>
    <property type="project" value="UniProtKB"/>
</dbReference>
<dbReference type="GO" id="GO:0005737">
    <property type="term" value="C:cytoplasm"/>
    <property type="evidence" value="ECO:0000250"/>
    <property type="project" value="UniProtKB"/>
</dbReference>
<dbReference type="GO" id="GO:0005829">
    <property type="term" value="C:cytosol"/>
    <property type="evidence" value="ECO:0000250"/>
    <property type="project" value="UniProtKB"/>
</dbReference>
<dbReference type="GO" id="GO:0070382">
    <property type="term" value="C:exocytic vesicle"/>
    <property type="evidence" value="ECO:0000314"/>
    <property type="project" value="CAFA"/>
</dbReference>
<dbReference type="GO" id="GO:0032982">
    <property type="term" value="C:myosin filament"/>
    <property type="evidence" value="ECO:0000318"/>
    <property type="project" value="GO_Central"/>
</dbReference>
<dbReference type="GO" id="GO:0016460">
    <property type="term" value="C:myosin II complex"/>
    <property type="evidence" value="ECO:0000318"/>
    <property type="project" value="GO_Central"/>
</dbReference>
<dbReference type="GO" id="GO:0005634">
    <property type="term" value="C:nucleus"/>
    <property type="evidence" value="ECO:0000250"/>
    <property type="project" value="UniProtKB"/>
</dbReference>
<dbReference type="GO" id="GO:0005886">
    <property type="term" value="C:plasma membrane"/>
    <property type="evidence" value="ECO:0000250"/>
    <property type="project" value="UniProtKB"/>
</dbReference>
<dbReference type="GO" id="GO:0032991">
    <property type="term" value="C:protein-containing complex"/>
    <property type="evidence" value="ECO:0000250"/>
    <property type="project" value="UniProtKB"/>
</dbReference>
<dbReference type="GO" id="GO:0001726">
    <property type="term" value="C:ruffle"/>
    <property type="evidence" value="ECO:0000250"/>
    <property type="project" value="UniProtKB"/>
</dbReference>
<dbReference type="GO" id="GO:0001725">
    <property type="term" value="C:stress fiber"/>
    <property type="evidence" value="ECO:0000250"/>
    <property type="project" value="UniProtKB"/>
</dbReference>
<dbReference type="GO" id="GO:0051015">
    <property type="term" value="F:actin filament binding"/>
    <property type="evidence" value="ECO:0000250"/>
    <property type="project" value="UniProtKB"/>
</dbReference>
<dbReference type="GO" id="GO:0005524">
    <property type="term" value="F:ATP binding"/>
    <property type="evidence" value="ECO:0007669"/>
    <property type="project" value="UniProtKB-KW"/>
</dbReference>
<dbReference type="GO" id="GO:0005516">
    <property type="term" value="F:calmodulin binding"/>
    <property type="evidence" value="ECO:0007669"/>
    <property type="project" value="UniProtKB-KW"/>
</dbReference>
<dbReference type="GO" id="GO:0005178">
    <property type="term" value="F:integrin binding"/>
    <property type="evidence" value="ECO:0000250"/>
    <property type="project" value="UniProtKB"/>
</dbReference>
<dbReference type="GO" id="GO:0000146">
    <property type="term" value="F:microfilament motor activity"/>
    <property type="evidence" value="ECO:0000250"/>
    <property type="project" value="UniProtKB"/>
</dbReference>
<dbReference type="GO" id="GO:0042803">
    <property type="term" value="F:protein homodimerization activity"/>
    <property type="evidence" value="ECO:0000250"/>
    <property type="project" value="UniProtKB"/>
</dbReference>
<dbReference type="GO" id="GO:0043495">
    <property type="term" value="F:protein-membrane adaptor activity"/>
    <property type="evidence" value="ECO:0000250"/>
    <property type="project" value="UniProtKB"/>
</dbReference>
<dbReference type="GO" id="GO:0030036">
    <property type="term" value="P:actin cytoskeleton organization"/>
    <property type="evidence" value="ECO:0000250"/>
    <property type="project" value="UniProtKB"/>
</dbReference>
<dbReference type="GO" id="GO:0030048">
    <property type="term" value="P:actin filament-based movement"/>
    <property type="evidence" value="ECO:0000250"/>
    <property type="project" value="UniProtKB"/>
</dbReference>
<dbReference type="GO" id="GO:0001525">
    <property type="term" value="P:angiogenesis"/>
    <property type="evidence" value="ECO:0000250"/>
    <property type="project" value="UniProtKB"/>
</dbReference>
<dbReference type="GO" id="GO:0043534">
    <property type="term" value="P:blood vessel endothelial cell migration"/>
    <property type="evidence" value="ECO:0000250"/>
    <property type="project" value="UniProtKB"/>
</dbReference>
<dbReference type="GO" id="GO:0007155">
    <property type="term" value="P:cell adhesion"/>
    <property type="evidence" value="ECO:0007669"/>
    <property type="project" value="UniProtKB-KW"/>
</dbReference>
<dbReference type="GO" id="GO:0060471">
    <property type="term" value="P:cortical granule exocytosis"/>
    <property type="evidence" value="ECO:0000250"/>
    <property type="project" value="UniProtKB"/>
</dbReference>
<dbReference type="GO" id="GO:0032506">
    <property type="term" value="P:cytokinetic process"/>
    <property type="evidence" value="ECO:0000250"/>
    <property type="project" value="UniProtKB"/>
</dbReference>
<dbReference type="GO" id="GO:0006509">
    <property type="term" value="P:membrane protein ectodomain proteolysis"/>
    <property type="evidence" value="ECO:0000250"/>
    <property type="project" value="UniProtKB"/>
</dbReference>
<dbReference type="GO" id="GO:0030224">
    <property type="term" value="P:monocyte differentiation"/>
    <property type="evidence" value="ECO:0000250"/>
    <property type="project" value="UniProtKB"/>
</dbReference>
<dbReference type="GO" id="GO:1903919">
    <property type="term" value="P:negative regulation of actin filament severing"/>
    <property type="evidence" value="ECO:0000250"/>
    <property type="project" value="UniProtKB"/>
</dbReference>
<dbReference type="GO" id="GO:0006911">
    <property type="term" value="P:phagocytosis, engulfment"/>
    <property type="evidence" value="ECO:0000250"/>
    <property type="project" value="UniProtKB"/>
</dbReference>
<dbReference type="GO" id="GO:0030220">
    <property type="term" value="P:platelet formation"/>
    <property type="evidence" value="ECO:0000250"/>
    <property type="project" value="UniProtKB"/>
</dbReference>
<dbReference type="GO" id="GO:1903923">
    <property type="term" value="P:positive regulation of protein processing in phagocytic vesicle"/>
    <property type="evidence" value="ECO:0000250"/>
    <property type="project" value="UniProtKB"/>
</dbReference>
<dbReference type="GO" id="GO:0015031">
    <property type="term" value="P:protein transport"/>
    <property type="evidence" value="ECO:0000250"/>
    <property type="project" value="UniProtKB"/>
</dbReference>
<dbReference type="GO" id="GO:0008360">
    <property type="term" value="P:regulation of cell shape"/>
    <property type="evidence" value="ECO:0000250"/>
    <property type="project" value="UniProtKB"/>
</dbReference>
<dbReference type="GO" id="GO:0006903">
    <property type="term" value="P:vesicle targeting"/>
    <property type="evidence" value="ECO:0000315"/>
    <property type="project" value="CAFA"/>
</dbReference>
<dbReference type="FunFam" id="2.30.30.360:FF:000001">
    <property type="entry name" value="Myosin heavy chain"/>
    <property type="match status" value="1"/>
</dbReference>
<dbReference type="FunFam" id="3.30.70.1590:FF:000001">
    <property type="entry name" value="Myosin heavy chain"/>
    <property type="match status" value="1"/>
</dbReference>
<dbReference type="FunFam" id="1.10.10.820:FF:000002">
    <property type="entry name" value="Myosin heavy chain 10"/>
    <property type="match status" value="1"/>
</dbReference>
<dbReference type="FunFam" id="1.20.120.720:FF:000002">
    <property type="entry name" value="Myosin heavy chain 10"/>
    <property type="match status" value="1"/>
</dbReference>
<dbReference type="FunFam" id="1.20.58.530:FF:000003">
    <property type="entry name" value="Myosin heavy chain 10"/>
    <property type="match status" value="1"/>
</dbReference>
<dbReference type="FunFam" id="1.20.5.340:FF:000008">
    <property type="entry name" value="Myosin heavy chain 11"/>
    <property type="match status" value="1"/>
</dbReference>
<dbReference type="FunFam" id="3.40.850.10:FF:000175">
    <property type="entry name" value="Myosin heavy chain 9"/>
    <property type="match status" value="1"/>
</dbReference>
<dbReference type="FunFam" id="1.20.5.340:FF:000007">
    <property type="entry name" value="Myosin heavy chain, non-muscle"/>
    <property type="match status" value="1"/>
</dbReference>
<dbReference type="FunFam" id="4.10.270.10:FF:000001">
    <property type="entry name" value="Myosin heavy chain, non-muscle"/>
    <property type="match status" value="1"/>
</dbReference>
<dbReference type="FunFam" id="1.20.5.340:FF:000009">
    <property type="entry name" value="myosin-11 isoform X2"/>
    <property type="match status" value="1"/>
</dbReference>
<dbReference type="FunFam" id="1.20.5.340:FF:000068">
    <property type="entry name" value="myosin-9 isoform X2"/>
    <property type="match status" value="1"/>
</dbReference>
<dbReference type="Gene3D" id="1.10.10.820">
    <property type="match status" value="1"/>
</dbReference>
<dbReference type="Gene3D" id="1.20.5.340">
    <property type="match status" value="4"/>
</dbReference>
<dbReference type="Gene3D" id="1.20.58.530">
    <property type="match status" value="1"/>
</dbReference>
<dbReference type="Gene3D" id="3.30.70.1590">
    <property type="match status" value="1"/>
</dbReference>
<dbReference type="Gene3D" id="6.10.250.2420">
    <property type="match status" value="1"/>
</dbReference>
<dbReference type="Gene3D" id="3.40.850.10">
    <property type="entry name" value="Kinesin motor domain"/>
    <property type="match status" value="1"/>
</dbReference>
<dbReference type="Gene3D" id="2.30.30.360">
    <property type="entry name" value="Myosin S1 fragment, N-terminal"/>
    <property type="match status" value="1"/>
</dbReference>
<dbReference type="Gene3D" id="1.20.120.720">
    <property type="entry name" value="Myosin VI head, motor domain, U50 subdomain"/>
    <property type="match status" value="1"/>
</dbReference>
<dbReference type="Gene3D" id="4.10.270.10">
    <property type="entry name" value="Myosin, subunit A"/>
    <property type="match status" value="1"/>
</dbReference>
<dbReference type="InterPro" id="IPR000048">
    <property type="entry name" value="IQ_motif_EF-hand-BS"/>
</dbReference>
<dbReference type="InterPro" id="IPR036961">
    <property type="entry name" value="Kinesin_motor_dom_sf"/>
</dbReference>
<dbReference type="InterPro" id="IPR001609">
    <property type="entry name" value="Myosin_head_motor_dom-like"/>
</dbReference>
<dbReference type="InterPro" id="IPR004009">
    <property type="entry name" value="Myosin_N"/>
</dbReference>
<dbReference type="InterPro" id="IPR008989">
    <property type="entry name" value="Myosin_S1_N"/>
</dbReference>
<dbReference type="InterPro" id="IPR002928">
    <property type="entry name" value="Myosin_tail"/>
</dbReference>
<dbReference type="InterPro" id="IPR027417">
    <property type="entry name" value="P-loop_NTPase"/>
</dbReference>
<dbReference type="InterPro" id="IPR036305">
    <property type="entry name" value="RGS_sf"/>
</dbReference>
<dbReference type="PANTHER" id="PTHR45615">
    <property type="entry name" value="MYOSIN HEAVY CHAIN, NON-MUSCLE"/>
    <property type="match status" value="1"/>
</dbReference>
<dbReference type="PANTHER" id="PTHR45615:SF16">
    <property type="entry name" value="MYOSIN-9"/>
    <property type="match status" value="1"/>
</dbReference>
<dbReference type="Pfam" id="PF00063">
    <property type="entry name" value="Myosin_head"/>
    <property type="match status" value="1"/>
</dbReference>
<dbReference type="Pfam" id="PF02736">
    <property type="entry name" value="Myosin_N"/>
    <property type="match status" value="1"/>
</dbReference>
<dbReference type="Pfam" id="PF01576">
    <property type="entry name" value="Myosin_tail_1"/>
    <property type="match status" value="1"/>
</dbReference>
<dbReference type="PRINTS" id="PR00193">
    <property type="entry name" value="MYOSINHEAVY"/>
</dbReference>
<dbReference type="SMART" id="SM00015">
    <property type="entry name" value="IQ"/>
    <property type="match status" value="1"/>
</dbReference>
<dbReference type="SMART" id="SM00242">
    <property type="entry name" value="MYSc"/>
    <property type="match status" value="1"/>
</dbReference>
<dbReference type="SUPFAM" id="SSF90257">
    <property type="entry name" value="Myosin rod fragments"/>
    <property type="match status" value="5"/>
</dbReference>
<dbReference type="SUPFAM" id="SSF52540">
    <property type="entry name" value="P-loop containing nucleoside triphosphate hydrolases"/>
    <property type="match status" value="1"/>
</dbReference>
<dbReference type="SUPFAM" id="SSF48097">
    <property type="entry name" value="Regulator of G-protein signaling, RGS"/>
    <property type="match status" value="1"/>
</dbReference>
<dbReference type="PROSITE" id="PS50096">
    <property type="entry name" value="IQ"/>
    <property type="match status" value="1"/>
</dbReference>
<dbReference type="PROSITE" id="PS51456">
    <property type="entry name" value="MYOSIN_MOTOR"/>
    <property type="match status" value="1"/>
</dbReference>
<dbReference type="PROSITE" id="PS51844">
    <property type="entry name" value="SH3_LIKE"/>
    <property type="match status" value="1"/>
</dbReference>
<evidence type="ECO:0000250" key="1"/>
<evidence type="ECO:0000250" key="2">
    <source>
        <dbReference type="UniProtKB" id="P35579"/>
    </source>
</evidence>
<evidence type="ECO:0000250" key="3">
    <source>
        <dbReference type="UniProtKB" id="P35580"/>
    </source>
</evidence>
<evidence type="ECO:0000250" key="4">
    <source>
        <dbReference type="UniProtKB" id="Q61879"/>
    </source>
</evidence>
<evidence type="ECO:0000250" key="5">
    <source>
        <dbReference type="UniProtKB" id="Q62812"/>
    </source>
</evidence>
<evidence type="ECO:0000250" key="6">
    <source>
        <dbReference type="UniProtKB" id="Q8VDD5"/>
    </source>
</evidence>
<evidence type="ECO:0000255" key="7"/>
<evidence type="ECO:0000255" key="8">
    <source>
        <dbReference type="PROSITE-ProRule" id="PRU00116"/>
    </source>
</evidence>
<evidence type="ECO:0000255" key="9">
    <source>
        <dbReference type="PROSITE-ProRule" id="PRU00782"/>
    </source>
</evidence>
<evidence type="ECO:0000255" key="10">
    <source>
        <dbReference type="PROSITE-ProRule" id="PRU01190"/>
    </source>
</evidence>
<evidence type="ECO:0000256" key="11">
    <source>
        <dbReference type="SAM" id="MobiDB-lite"/>
    </source>
</evidence>
<evidence type="ECO:0000305" key="12"/>
<reference key="1">
    <citation type="submission" date="2005-09" db="EMBL/GenBank/DDBJ databases">
        <title>Molecular characterization of the canine myosin, heavy polypeptide 9, non-muscle (MYH9) gene on dog chromosome 10q23.2.</title>
        <authorList>
            <person name="Mieskes K."/>
            <person name="Wohlke A."/>
            <person name="Drogemuller C."/>
            <person name="Distl O."/>
        </authorList>
    </citation>
    <scope>NUCLEOTIDE SEQUENCE [MRNA]</scope>
</reference>
<gene>
    <name type="primary">MYH9</name>
</gene>
<comment type="function">
    <text evidence="2 6">Cellular myosin that appears to play a role in cytokinesis, cell shape, and specialized functions such as secretion and capping (By similarity). Required for cortical actin clearance prior to oocyte exocytosis (By similarity). Promotes cell motility in conjunction with S100A4 (By similarity). During cell spreading, plays an important role in cytoskeleton reorganization, focal contact formation (in the margins but not the central part of spreading cells), and lamellipodial retraction; this function is mechanically antagonized by MYH10 (By similarity).</text>
</comment>
<comment type="subunit">
    <text evidence="2 5 6">Myosin is a hexameric protein that consists of 2 heavy chain subunits (MHC), 2 alkali light chain subunits (MLC) and 2 regulatory light chain subunits (MLC-2) (By similarity). Interacts with RASIP1 (By similarity). Interacts with DDR1 (By similarity). Interacts with PDLIM2 (By similarity). Interacts with SVIL (By similarity). Interacts with HTRA3 (By similarity). Interacts with Myo7a (By similarity). Interacts with CFAP95 (By similarity). Interacts with LIMCH1; independently of the integration of MYH9 into the myosin complex (By similarity). Interacts with RAB3A (By similarity). Interacts with ZBED4 (By similarity). Interacts with S100A4; this interaction increases cell motility (By similarity).</text>
</comment>
<comment type="subcellular location">
    <subcellularLocation>
        <location evidence="6">Cytoplasm</location>
        <location evidence="6">Cytoskeleton</location>
    </subcellularLocation>
    <subcellularLocation>
        <location evidence="6">Cytoplasm</location>
        <location evidence="6">Cell cortex</location>
    </subcellularLocation>
    <subcellularLocation>
        <location evidence="6">Cytoplasmic vesicle</location>
        <location evidence="6">Secretory vesicle</location>
        <location evidence="6">Cortical granule</location>
    </subcellularLocation>
    <text evidence="2">Colocalizes with actin filaments at lamellipodia margins and at the leading edge of migrating cells (By similarity). In retinal pigment epithelial cells, predominantly localized to stress fiber-like structures with some localization to cytoplasmic puncta (By similarity).</text>
</comment>
<comment type="domain">
    <text>The rodlike tail sequence is highly repetitive, showing cycles of a 28-residue repeat pattern composed of 4 heptapeptides, characteristic for alpha-helical coiled coils.</text>
</comment>
<comment type="PTM">
    <text evidence="2 6">ISGylated.</text>
</comment>
<comment type="PTM">
    <text evidence="2 6">Ubiquitination.</text>
</comment>
<comment type="similarity">
    <text evidence="12">Belongs to the TRAFAC class myosin-kinesin ATPase superfamily. Myosin family.</text>
</comment>
<sequence length="1960" mass="226469">MAQQAADKYLYVDKNFINNPLAQADWAAKKLVWVPSDKSGFEPASLKEEVGEEAIVELVENGKKVKVNKDDIQKMNPPKFSKVEDMAELTCLNEASVLHNLKEXYYSGLIYTYSGLFCVVINPYKNLPIYSEEIVEMYKGKKRHEMPPHIYAITDTAYRSMMQDREDQSILCTGESGAGKTENTKKVIQYLAHVASSHKSKKDQGELERQLLQANPILEAFGNAKTVKNDNSSRFGKFIRINFDVNGYIVGANIETYLLEKSRAIRQAKEERTFHIFYYLLSGAGEHLKTDLLLEPYNKYRFLSNGHVTIPGQQDKDMFQETMEAMRIMGIPEEEQMGLLRVISGVLQLGNIVFKKERNTDQASMPDNTAAQKVSHLLGINVTDFTRGILTPRIKVGRDYVQKAQTKEQADFAIEALAKATYERMFRWLVLRINKALDKTKRQGASFIGILDIAGFEIFDLNSFEQLCINYTNEKLQQLFNHTMFILEQEEYQREGIEWNFIDFGLDLQPCIDLIEKPAGPPGILALLDEECWFPKATDKSFVEKVVQEQGTHPKFQKPKQLKDKADFCIIHYAGKVDYKADEWLMKNMDPLNDNIATLLHQSSDKFVSELWKDVDRIIGLDQVAGMSETALPGAFKTRKGMFRTVGQLYKEQLAKLMATLRNTNPNFVRCIIPNHEKKAGKLDPHLVLDQLRCNGVLEGIRICRQGFPNRVVFQEFRQRYEILTPNSIPKGFMDGKQACVLMIKALELDSNLYRIGQSKVFFRAGVLAHLEEERDLKITDVIIGFQACCRGYLARKAFAKRQQQLTAMKVLQRNCAAYLKLRNWQWWRLFTKVKPLLQVSRQEEEMMAKEEELVKVREKQLAAENRLTEMETLQSQLMAEKLQLQEQLQAETELCAEAEELRARLTAKKQELEEICHDLEARVEEEEERCQHLQAEKKKMQQNIQELEEQLEEEESARQKLQLEKVTTEAKLKKLEEDQIIMEDQNCKLAKEKKLLEDRIAEFTTNLMEEEEKSKSLAKLKNKHEAMITDLEERLRREEKQRQELEKTRRKLEGDSTDLNDQIAELQAQIAELKMQLAKKEEELQAALARVEEEATQKNMALKKIRELESQISELQEDLESERASRNKAEKQKRDLGEELEALKTELEDTLDSTAAQQELRSKREQEVNILKKTLEEEARTHEAQIQEMRQKHSQAVEELAEQLEQTKRVKANLEKAKQTLENERGELANEVKVLQQGKGDSEHKRKKAEAQLQELQVKFTEGERVRTELADKVTKLQVELDNVMGLLTQSDSKSSKLTKDFSALESQLQDTQELLQEENRQKLSLSTKLKQMEDEKNSFKEQLEEEEEAKRNLEKQIATLHAQVTDMKKKMEDGVGCLETAEEAKRKLQKDLEGLGQRYEEKVAAYDKLEKTKTRLQQELDDLLVDLDHQRRTASNLEKKQKKFDQLLAEEKTISAKYAEERDRAEAEAREKETKALSLARALEEAMEQKAELERLNKQFRTEMEDLMSSKDDVGKSVHELEKSKRALEQQVEEMKTQLEELEDELQATEDAKLRLEVNLQAMKAQFERDLQGRDEQSEEKKKQLVRQVREMEAELEDEKKQRSMAVAARKKLEMDLKDLEAHIDSANKNRDEAIKQLRKLQAQMKDCVRELDDTRASREEILAQAKENEKKMKSMEAEMIQLQEELAAAERAKRQAQQERDELADEIANSSGKGALALEEKRRLEARIAQLEEELEEEQGNTELVNDRLKKANLQIDQINTDLNLERSHAQKNENARQQLERQNKELKVKLQEMEGTVKSKYKASITALEAKIAQLEEQLDNETKERQAACKQVRRAEKKLKDVLLQVDDERRNAEQFKDQADKASTRLKQLKRQLEEAEEEAQRANASRRKLQRELEDATETADAMNREVSSLKNKLRRGDLPFVVPRRVARKGAGDCSDEEVDGKADGAEAKAAE</sequence>
<protein>
    <recommendedName>
        <fullName>Myosin-9</fullName>
    </recommendedName>
    <alternativeName>
        <fullName>Myosin heavy chain 9</fullName>
    </alternativeName>
    <alternativeName>
        <fullName>Myosin heavy chain, non-muscle IIa</fullName>
    </alternativeName>
    <alternativeName>
        <fullName>Non-muscle myosin heavy chain IIa</fullName>
        <shortName>NMMHC II-a</shortName>
        <shortName>NMMHC-IIA</shortName>
    </alternativeName>
</protein>
<organism>
    <name type="scientific">Canis lupus familiaris</name>
    <name type="common">Dog</name>
    <name type="synonym">Canis familiaris</name>
    <dbReference type="NCBI Taxonomy" id="9615"/>
    <lineage>
        <taxon>Eukaryota</taxon>
        <taxon>Metazoa</taxon>
        <taxon>Chordata</taxon>
        <taxon>Craniata</taxon>
        <taxon>Vertebrata</taxon>
        <taxon>Euteleostomi</taxon>
        <taxon>Mammalia</taxon>
        <taxon>Eutheria</taxon>
        <taxon>Laurasiatheria</taxon>
        <taxon>Carnivora</taxon>
        <taxon>Caniformia</taxon>
        <taxon>Canidae</taxon>
        <taxon>Canis</taxon>
    </lineage>
</organism>
<feature type="initiator methionine" description="Removed" evidence="2">
    <location>
        <position position="1"/>
    </location>
</feature>
<feature type="chain" id="PRO_0000274171" description="Myosin-9">
    <location>
        <begin position="2"/>
        <end position="1960"/>
    </location>
</feature>
<feature type="domain" description="Myosin N-terminal SH3-like" evidence="10">
    <location>
        <begin position="27"/>
        <end position="77"/>
    </location>
</feature>
<feature type="domain" description="Myosin motor" evidence="9">
    <location>
        <begin position="81"/>
        <end position="776"/>
    </location>
</feature>
<feature type="domain" description="IQ" evidence="8">
    <location>
        <begin position="779"/>
        <end position="808"/>
    </location>
</feature>
<feature type="region of interest" description="Mediates interaction with LIMCH1" evidence="2">
    <location>
        <begin position="2"/>
        <end position="838"/>
    </location>
</feature>
<feature type="region of interest" description="Actin-binding" evidence="1">
    <location>
        <begin position="654"/>
        <end position="676"/>
    </location>
</feature>
<feature type="region of interest" description="Disordered" evidence="11">
    <location>
        <begin position="1117"/>
        <end position="1137"/>
    </location>
</feature>
<feature type="region of interest" description="Disordered" evidence="11">
    <location>
        <begin position="1877"/>
        <end position="1918"/>
    </location>
</feature>
<feature type="region of interest" description="Disordered" evidence="11">
    <location>
        <begin position="1934"/>
        <end position="1960"/>
    </location>
</feature>
<feature type="coiled-coil region" evidence="7">
    <location>
        <begin position="837"/>
        <end position="1926"/>
    </location>
</feature>
<feature type="compositionally biased region" description="Basic and acidic residues" evidence="11">
    <location>
        <begin position="1122"/>
        <end position="1137"/>
    </location>
</feature>
<feature type="compositionally biased region" description="Basic and acidic residues" evidence="11">
    <location>
        <begin position="1948"/>
        <end position="1960"/>
    </location>
</feature>
<feature type="binding site" evidence="7">
    <location>
        <begin position="174"/>
        <end position="181"/>
    </location>
    <ligand>
        <name>ATP</name>
        <dbReference type="ChEBI" id="CHEBI:30616"/>
    </ligand>
</feature>
<feature type="modified residue" description="N-acetylalanine" evidence="2">
    <location>
        <position position="2"/>
    </location>
</feature>
<feature type="modified residue" description="N6-acetyllysine" evidence="2">
    <location>
        <position position="8"/>
    </location>
</feature>
<feature type="modified residue" description="Phosphotyrosine" evidence="2">
    <location>
        <position position="11"/>
    </location>
</feature>
<feature type="modified residue" description="N6-acetyllysine" evidence="2">
    <location>
        <position position="102"/>
    </location>
</feature>
<feature type="modified residue" description="N6-acetyllysine" evidence="2">
    <location>
        <position position="299"/>
    </location>
</feature>
<feature type="modified residue" description="N6-acetyllysine" evidence="3">
    <location>
        <position position="435"/>
    </location>
</feature>
<feature type="modified residue" description="N6-acetyllysine" evidence="6">
    <location>
        <position position="613"/>
    </location>
</feature>
<feature type="modified residue" description="Phosphoserine" evidence="2">
    <location>
        <position position="628"/>
    </location>
</feature>
<feature type="modified residue" description="Phosphotyrosine" evidence="2">
    <location>
        <position position="754"/>
    </location>
</feature>
<feature type="modified residue" description="N6-succinyllysine" evidence="6">
    <location>
        <position position="850"/>
    </location>
</feature>
<feature type="modified residue" description="N6-acetyllysine" evidence="6">
    <location>
        <position position="860"/>
    </location>
</feature>
<feature type="modified residue" description="N6-acetyllysine" evidence="6">
    <location>
        <position position="975"/>
    </location>
</feature>
<feature type="modified residue" description="N6-acetyllysine" evidence="2">
    <location>
        <position position="1024"/>
    </location>
</feature>
<feature type="modified residue" description="Phosphoserine" evidence="6">
    <location>
        <position position="1114"/>
    </location>
</feature>
<feature type="modified residue" description="N6-acetyllysine" evidence="4">
    <location>
        <position position="1234"/>
    </location>
</feature>
<feature type="modified residue" description="N6-acetyllysine" evidence="6">
    <location>
        <position position="1249"/>
    </location>
</feature>
<feature type="modified residue" description="N6-acetyllysine" evidence="2">
    <location>
        <position position="1357"/>
    </location>
</feature>
<feature type="modified residue" description="N6-acetyllysine" evidence="2">
    <location>
        <position position="1392"/>
    </location>
</feature>
<feature type="modified residue" description="N6-acetyllysine" evidence="2">
    <location>
        <position position="1404"/>
    </location>
</feature>
<feature type="modified residue" description="N6-acetyllysine" evidence="2">
    <location>
        <position position="1410"/>
    </location>
</feature>
<feature type="modified residue" description="N6-acetyllysine" evidence="2">
    <location>
        <position position="1459"/>
    </location>
</feature>
<feature type="modified residue" description="N6-acetyllysine" evidence="2">
    <location>
        <position position="1638"/>
    </location>
</feature>
<feature type="modified residue" description="N6-succinyllysine" evidence="6">
    <location>
        <position position="1669"/>
    </location>
</feature>
<feature type="modified residue" description="Phosphoserine" evidence="2">
    <location>
        <position position="1714"/>
    </location>
</feature>
<feature type="modified residue" description="N6-acetyllysine" evidence="6">
    <location>
        <position position="1793"/>
    </location>
</feature>
<feature type="modified residue" description="N6-acetyllysine" evidence="6">
    <location>
        <position position="1802"/>
    </location>
</feature>
<feature type="modified residue" description="N6-acetyllysine" evidence="6">
    <location>
        <position position="1845"/>
    </location>
</feature>
<feature type="modified residue" description="Omega-N-methylarginine" evidence="4">
    <location>
        <position position="1923"/>
    </location>
</feature>
<feature type="modified residue" description="Phosphoserine" evidence="2">
    <location>
        <position position="1943"/>
    </location>
</feature>
<accession>Q258K2</accession>
<name>MYH9_CANLF</name>
<proteinExistence type="evidence at transcript level"/>
<keyword id="KW-0007">Acetylation</keyword>
<keyword id="KW-0009">Actin-binding</keyword>
<keyword id="KW-0067">ATP-binding</keyword>
<keyword id="KW-0112">Calmodulin-binding</keyword>
<keyword id="KW-0130">Cell adhesion</keyword>
<keyword id="KW-0133">Cell shape</keyword>
<keyword id="KW-0175">Coiled coil</keyword>
<keyword id="KW-0963">Cytoplasm</keyword>
<keyword id="KW-0968">Cytoplasmic vesicle</keyword>
<keyword id="KW-0206">Cytoskeleton</keyword>
<keyword id="KW-0488">Methylation</keyword>
<keyword id="KW-0505">Motor protein</keyword>
<keyword id="KW-0518">Myosin</keyword>
<keyword id="KW-0547">Nucleotide-binding</keyword>
<keyword id="KW-0597">Phosphoprotein</keyword>
<keyword id="KW-1185">Reference proteome</keyword>
<keyword id="KW-0832">Ubl conjugation</keyword>